<gene>
    <name evidence="1" type="primary">purM</name>
    <name type="ordered locus">BCE_0325</name>
</gene>
<accession>Q73EN3</accession>
<protein>
    <recommendedName>
        <fullName evidence="1">Phosphoribosylformylglycinamidine cyclo-ligase</fullName>
        <ecNumber evidence="1">6.3.3.1</ecNumber>
    </recommendedName>
    <alternativeName>
        <fullName evidence="1">AIR synthase</fullName>
    </alternativeName>
    <alternativeName>
        <fullName evidence="1">AIRS</fullName>
    </alternativeName>
    <alternativeName>
        <fullName evidence="1">Phosphoribosyl-aminoimidazole synthetase</fullName>
    </alternativeName>
</protein>
<name>PUR5_BACC1</name>
<feature type="chain" id="PRO_0000258328" description="Phosphoribosylformylglycinamidine cyclo-ligase">
    <location>
        <begin position="1"/>
        <end position="346"/>
    </location>
</feature>
<organism>
    <name type="scientific">Bacillus cereus (strain ATCC 10987 / NRS 248)</name>
    <dbReference type="NCBI Taxonomy" id="222523"/>
    <lineage>
        <taxon>Bacteria</taxon>
        <taxon>Bacillati</taxon>
        <taxon>Bacillota</taxon>
        <taxon>Bacilli</taxon>
        <taxon>Bacillales</taxon>
        <taxon>Bacillaceae</taxon>
        <taxon>Bacillus</taxon>
        <taxon>Bacillus cereus group</taxon>
    </lineage>
</organism>
<reference key="1">
    <citation type="journal article" date="2004" name="Nucleic Acids Res.">
        <title>The genome sequence of Bacillus cereus ATCC 10987 reveals metabolic adaptations and a large plasmid related to Bacillus anthracis pXO1.</title>
        <authorList>
            <person name="Rasko D.A."/>
            <person name="Ravel J."/>
            <person name="Oekstad O.A."/>
            <person name="Helgason E."/>
            <person name="Cer R.Z."/>
            <person name="Jiang L."/>
            <person name="Shores K.A."/>
            <person name="Fouts D.E."/>
            <person name="Tourasse N.J."/>
            <person name="Angiuoli S.V."/>
            <person name="Kolonay J.F."/>
            <person name="Nelson W.C."/>
            <person name="Kolstoe A.-B."/>
            <person name="Fraser C.M."/>
            <person name="Read T.D."/>
        </authorList>
    </citation>
    <scope>NUCLEOTIDE SEQUENCE [LARGE SCALE GENOMIC DNA]</scope>
    <source>
        <strain>ATCC 10987 / NRS 248</strain>
    </source>
</reference>
<proteinExistence type="inferred from homology"/>
<comment type="catalytic activity">
    <reaction evidence="1">
        <text>2-formamido-N(1)-(5-O-phospho-beta-D-ribosyl)acetamidine + ATP = 5-amino-1-(5-phospho-beta-D-ribosyl)imidazole + ADP + phosphate + H(+)</text>
        <dbReference type="Rhea" id="RHEA:23032"/>
        <dbReference type="ChEBI" id="CHEBI:15378"/>
        <dbReference type="ChEBI" id="CHEBI:30616"/>
        <dbReference type="ChEBI" id="CHEBI:43474"/>
        <dbReference type="ChEBI" id="CHEBI:137981"/>
        <dbReference type="ChEBI" id="CHEBI:147287"/>
        <dbReference type="ChEBI" id="CHEBI:456216"/>
        <dbReference type="EC" id="6.3.3.1"/>
    </reaction>
</comment>
<comment type="pathway">
    <text evidence="1">Purine metabolism; IMP biosynthesis via de novo pathway; 5-amino-1-(5-phospho-D-ribosyl)imidazole from N(2)-formyl-N(1)-(5-phospho-D-ribosyl)glycinamide: step 2/2.</text>
</comment>
<comment type="subcellular location">
    <subcellularLocation>
        <location evidence="1">Cytoplasm</location>
    </subcellularLocation>
</comment>
<comment type="similarity">
    <text evidence="1">Belongs to the AIR synthase family.</text>
</comment>
<keyword id="KW-0067">ATP-binding</keyword>
<keyword id="KW-0963">Cytoplasm</keyword>
<keyword id="KW-0436">Ligase</keyword>
<keyword id="KW-0547">Nucleotide-binding</keyword>
<keyword id="KW-0658">Purine biosynthesis</keyword>
<evidence type="ECO:0000255" key="1">
    <source>
        <dbReference type="HAMAP-Rule" id="MF_00741"/>
    </source>
</evidence>
<dbReference type="EC" id="6.3.3.1" evidence="1"/>
<dbReference type="EMBL" id="AE017194">
    <property type="protein sequence ID" value="AAS39261.1"/>
    <property type="molecule type" value="Genomic_DNA"/>
</dbReference>
<dbReference type="SMR" id="Q73EN3"/>
<dbReference type="KEGG" id="bca:BCE_0325"/>
<dbReference type="HOGENOM" id="CLU_047116_0_0_9"/>
<dbReference type="UniPathway" id="UPA00074">
    <property type="reaction ID" value="UER00129"/>
</dbReference>
<dbReference type="Proteomes" id="UP000002527">
    <property type="component" value="Chromosome"/>
</dbReference>
<dbReference type="GO" id="GO:0005829">
    <property type="term" value="C:cytosol"/>
    <property type="evidence" value="ECO:0007669"/>
    <property type="project" value="TreeGrafter"/>
</dbReference>
<dbReference type="GO" id="GO:0005524">
    <property type="term" value="F:ATP binding"/>
    <property type="evidence" value="ECO:0007669"/>
    <property type="project" value="UniProtKB-KW"/>
</dbReference>
<dbReference type="GO" id="GO:0004637">
    <property type="term" value="F:phosphoribosylamine-glycine ligase activity"/>
    <property type="evidence" value="ECO:0007669"/>
    <property type="project" value="TreeGrafter"/>
</dbReference>
<dbReference type="GO" id="GO:0004641">
    <property type="term" value="F:phosphoribosylformylglycinamidine cyclo-ligase activity"/>
    <property type="evidence" value="ECO:0007669"/>
    <property type="project" value="UniProtKB-UniRule"/>
</dbReference>
<dbReference type="GO" id="GO:0006189">
    <property type="term" value="P:'de novo' IMP biosynthetic process"/>
    <property type="evidence" value="ECO:0007669"/>
    <property type="project" value="UniProtKB-UniRule"/>
</dbReference>
<dbReference type="GO" id="GO:0046084">
    <property type="term" value="P:adenine biosynthetic process"/>
    <property type="evidence" value="ECO:0007669"/>
    <property type="project" value="TreeGrafter"/>
</dbReference>
<dbReference type="CDD" id="cd02196">
    <property type="entry name" value="PurM"/>
    <property type="match status" value="1"/>
</dbReference>
<dbReference type="FunFam" id="3.30.1330.10:FF:000001">
    <property type="entry name" value="Phosphoribosylformylglycinamidine cyclo-ligase"/>
    <property type="match status" value="1"/>
</dbReference>
<dbReference type="FunFam" id="3.90.650.10:FF:000001">
    <property type="entry name" value="Phosphoribosylformylglycinamidine cyclo-ligase"/>
    <property type="match status" value="1"/>
</dbReference>
<dbReference type="Gene3D" id="3.90.650.10">
    <property type="entry name" value="PurM-like C-terminal domain"/>
    <property type="match status" value="1"/>
</dbReference>
<dbReference type="Gene3D" id="3.30.1330.10">
    <property type="entry name" value="PurM-like, N-terminal domain"/>
    <property type="match status" value="1"/>
</dbReference>
<dbReference type="HAMAP" id="MF_00741">
    <property type="entry name" value="AIRS"/>
    <property type="match status" value="1"/>
</dbReference>
<dbReference type="InterPro" id="IPR010918">
    <property type="entry name" value="PurM-like_C_dom"/>
</dbReference>
<dbReference type="InterPro" id="IPR036676">
    <property type="entry name" value="PurM-like_C_sf"/>
</dbReference>
<dbReference type="InterPro" id="IPR016188">
    <property type="entry name" value="PurM-like_N"/>
</dbReference>
<dbReference type="InterPro" id="IPR036921">
    <property type="entry name" value="PurM-like_N_sf"/>
</dbReference>
<dbReference type="InterPro" id="IPR004733">
    <property type="entry name" value="PurM_cligase"/>
</dbReference>
<dbReference type="NCBIfam" id="TIGR00878">
    <property type="entry name" value="purM"/>
    <property type="match status" value="1"/>
</dbReference>
<dbReference type="PANTHER" id="PTHR10520:SF12">
    <property type="entry name" value="TRIFUNCTIONAL PURINE BIOSYNTHETIC PROTEIN ADENOSINE-3"/>
    <property type="match status" value="1"/>
</dbReference>
<dbReference type="PANTHER" id="PTHR10520">
    <property type="entry name" value="TRIFUNCTIONAL PURINE BIOSYNTHETIC PROTEIN ADENOSINE-3-RELATED"/>
    <property type="match status" value="1"/>
</dbReference>
<dbReference type="Pfam" id="PF00586">
    <property type="entry name" value="AIRS"/>
    <property type="match status" value="1"/>
</dbReference>
<dbReference type="Pfam" id="PF02769">
    <property type="entry name" value="AIRS_C"/>
    <property type="match status" value="1"/>
</dbReference>
<dbReference type="SUPFAM" id="SSF56042">
    <property type="entry name" value="PurM C-terminal domain-like"/>
    <property type="match status" value="1"/>
</dbReference>
<dbReference type="SUPFAM" id="SSF55326">
    <property type="entry name" value="PurM N-terminal domain-like"/>
    <property type="match status" value="1"/>
</dbReference>
<sequence>MANAYKQAGVDIEAGYEAVSRMKKHVQTTMRKEVLGGLGGFGGMFDLSKFALEEPVLVSGTDGVGTKLMLAFMADKHDTIGIDAVAMCVNDIVVQGAEPLFFLDYIACGKAEPSKIENIVKGISEGCRQAGCALIGGETAEMPGMYSTEEYDLAGFTVGIVDKKKIVTGEKIEAGHVLIGLASSGIHSNGYSLVRKVLLEDGELSLDRIYGRLELPLGEELLKPTKIYVKPILELLKKYEVYGMAHITGGGFIENIPRMLPEEIGAEIELGSWEIQPIFSLLQEVGKLEEKEMFNIFNMGIGMVVAVKEEDAKDVVRLLEEQGETARIIGRTVQGAGVTFNGGTAL</sequence>